<dbReference type="EMBL" id="AF528078">
    <property type="protein sequence ID" value="AAO33761.1"/>
    <property type="molecule type" value="mRNA"/>
</dbReference>
<dbReference type="EMBL" id="AF528081">
    <property type="protein sequence ID" value="AAO33764.1"/>
    <property type="molecule type" value="mRNA"/>
</dbReference>
<dbReference type="EMBL" id="AY522649">
    <property type="protein sequence ID" value="AAS13454.1"/>
    <property type="molecule type" value="mRNA"/>
</dbReference>
<dbReference type="EMBL" id="AK154842">
    <property type="protein sequence ID" value="BAE32868.1"/>
    <property type="molecule type" value="mRNA"/>
</dbReference>
<dbReference type="EMBL" id="AK161428">
    <property type="protein sequence ID" value="BAE36390.1"/>
    <property type="molecule type" value="mRNA"/>
</dbReference>
<dbReference type="EMBL" id="AL671968">
    <property type="protein sequence ID" value="CAI35210.1"/>
    <property type="molecule type" value="Genomic_DNA"/>
</dbReference>
<dbReference type="EMBL" id="AL671968">
    <property type="protein sequence ID" value="CAI35211.1"/>
    <property type="status" value="ALT_SEQ"/>
    <property type="molecule type" value="Genomic_DNA"/>
</dbReference>
<dbReference type="EMBL" id="AL671968">
    <property type="protein sequence ID" value="CAI35212.1"/>
    <property type="molecule type" value="Genomic_DNA"/>
</dbReference>
<dbReference type="EMBL" id="AL671968">
    <property type="protein sequence ID" value="CAI35213.1"/>
    <property type="status" value="ALT_SEQ"/>
    <property type="molecule type" value="Genomic_DNA"/>
</dbReference>
<dbReference type="EMBL" id="AL671968">
    <property type="protein sequence ID" value="CAI35214.1"/>
    <property type="status" value="ALT_SEQ"/>
    <property type="molecule type" value="Genomic_DNA"/>
</dbReference>
<dbReference type="EMBL" id="BC055920">
    <property type="protein sequence ID" value="AAH55920.1"/>
    <property type="molecule type" value="mRNA"/>
</dbReference>
<dbReference type="EMBL" id="BC079641">
    <property type="protein sequence ID" value="AAH79641.1"/>
    <property type="molecule type" value="mRNA"/>
</dbReference>
<dbReference type="CCDS" id="CCDS24357.1">
    <molecule id="Q7TMJ8-1"/>
</dbReference>
<dbReference type="RefSeq" id="NP_835362.2">
    <molecule id="Q7TMJ8-1"/>
    <property type="nucleotide sequence ID" value="NM_178149.4"/>
</dbReference>
<dbReference type="FunCoup" id="Q7TMJ8">
    <property type="interactions" value="566"/>
</dbReference>
<dbReference type="STRING" id="10090.ENSMUSP00000036921"/>
<dbReference type="GlyGen" id="Q7TMJ8">
    <property type="glycosylation" value="1 site"/>
</dbReference>
<dbReference type="iPTMnet" id="Q7TMJ8"/>
<dbReference type="PhosphoSitePlus" id="Q7TMJ8"/>
<dbReference type="PaxDb" id="10090-ENSMUSP00000036921"/>
<dbReference type="PeptideAtlas" id="Q7TMJ8"/>
<dbReference type="ProteomicsDB" id="287750">
    <molecule id="Q7TMJ8-1"/>
</dbReference>
<dbReference type="ProteomicsDB" id="287751">
    <molecule id="Q7TMJ8-2"/>
</dbReference>
<dbReference type="Pumba" id="Q7TMJ8"/>
<dbReference type="ABCD" id="Q7TMJ8">
    <property type="antibodies" value="5 sequenced antibodies"/>
</dbReference>
<dbReference type="Antibodypedia" id="1229">
    <property type="antibodies" value="134 antibodies from 23 providers"/>
</dbReference>
<dbReference type="Ensembl" id="ENSMUST00000045153.11">
    <molecule id="Q7TMJ8-1"/>
    <property type="protein sequence ID" value="ENSMUSP00000036921.5"/>
    <property type="gene ID" value="ENSMUSG00000034614.15"/>
</dbReference>
<dbReference type="Ensembl" id="ENSMUST00000093399.11">
    <molecule id="Q7TMJ8-2"/>
    <property type="protein sequence ID" value="ENSMUSP00000091100.5"/>
    <property type="gene ID" value="ENSMUSG00000034614.15"/>
</dbReference>
<dbReference type="GeneID" id="216505"/>
<dbReference type="KEGG" id="mmu:216505"/>
<dbReference type="UCSC" id="uc007hsp.1">
    <molecule id="Q7TMJ8-2"/>
    <property type="organism name" value="mouse"/>
</dbReference>
<dbReference type="UCSC" id="uc007hsq.1">
    <molecule id="Q7TMJ8-1"/>
    <property type="organism name" value="mouse"/>
</dbReference>
<dbReference type="AGR" id="MGI:1917016"/>
<dbReference type="CTD" id="113791"/>
<dbReference type="MGI" id="MGI:1917016">
    <property type="gene designation" value="Pik3ip1"/>
</dbReference>
<dbReference type="VEuPathDB" id="HostDB:ENSMUSG00000034614"/>
<dbReference type="eggNOG" id="ENOG502QTWD">
    <property type="taxonomic scope" value="Eukaryota"/>
</dbReference>
<dbReference type="GeneTree" id="ENSGT00390000017774"/>
<dbReference type="HOGENOM" id="CLU_092099_0_0_1"/>
<dbReference type="InParanoid" id="Q7TMJ8"/>
<dbReference type="OMA" id="HDQKVCE"/>
<dbReference type="OrthoDB" id="9893972at2759"/>
<dbReference type="PhylomeDB" id="Q7TMJ8"/>
<dbReference type="TreeFam" id="TF331319"/>
<dbReference type="BioGRID-ORCS" id="216505">
    <property type="hits" value="3 hits in 76 CRISPR screens"/>
</dbReference>
<dbReference type="ChiTaRS" id="Pik3ip1">
    <property type="organism name" value="mouse"/>
</dbReference>
<dbReference type="PRO" id="PR:Q7TMJ8"/>
<dbReference type="Proteomes" id="UP000000589">
    <property type="component" value="Chromosome 11"/>
</dbReference>
<dbReference type="RNAct" id="Q7TMJ8">
    <property type="molecule type" value="protein"/>
</dbReference>
<dbReference type="Bgee" id="ENSMUSG00000034614">
    <property type="expression patterns" value="Expressed in interventricular septum and 227 other cell types or tissues"/>
</dbReference>
<dbReference type="ExpressionAtlas" id="Q7TMJ8">
    <property type="expression patterns" value="baseline and differential"/>
</dbReference>
<dbReference type="GO" id="GO:0005886">
    <property type="term" value="C:plasma membrane"/>
    <property type="evidence" value="ECO:0007669"/>
    <property type="project" value="UniProtKB-SubCell"/>
</dbReference>
<dbReference type="GO" id="GO:0141039">
    <property type="term" value="F:phosphatidylinositol 3-kinase inhibitor activity"/>
    <property type="evidence" value="ECO:0000314"/>
    <property type="project" value="UniProtKB"/>
</dbReference>
<dbReference type="GO" id="GO:0051898">
    <property type="term" value="P:negative regulation of phosphatidylinositol 3-kinase/protein kinase B signal transduction"/>
    <property type="evidence" value="ECO:0007669"/>
    <property type="project" value="Ensembl"/>
</dbReference>
<dbReference type="CDD" id="cd00108">
    <property type="entry name" value="KR"/>
    <property type="match status" value="1"/>
</dbReference>
<dbReference type="FunFam" id="2.40.20.10:FF:000012">
    <property type="entry name" value="Phosphoinositide-3-kinase-interacting protein 1"/>
    <property type="match status" value="1"/>
</dbReference>
<dbReference type="Gene3D" id="2.40.20.10">
    <property type="entry name" value="Plasminogen Kringle 4"/>
    <property type="match status" value="1"/>
</dbReference>
<dbReference type="InterPro" id="IPR000001">
    <property type="entry name" value="Kringle"/>
</dbReference>
<dbReference type="InterPro" id="IPR013806">
    <property type="entry name" value="Kringle-like"/>
</dbReference>
<dbReference type="InterPro" id="IPR018056">
    <property type="entry name" value="Kringle_CS"/>
</dbReference>
<dbReference type="InterPro" id="IPR038178">
    <property type="entry name" value="Kringle_sf"/>
</dbReference>
<dbReference type="Pfam" id="PF00051">
    <property type="entry name" value="Kringle"/>
    <property type="match status" value="1"/>
</dbReference>
<dbReference type="SMART" id="SM00130">
    <property type="entry name" value="KR"/>
    <property type="match status" value="1"/>
</dbReference>
<dbReference type="SUPFAM" id="SSF57440">
    <property type="entry name" value="Kringle-like"/>
    <property type="match status" value="1"/>
</dbReference>
<dbReference type="PROSITE" id="PS00021">
    <property type="entry name" value="KRINGLE_1"/>
    <property type="match status" value="1"/>
</dbReference>
<dbReference type="PROSITE" id="PS50070">
    <property type="entry name" value="KRINGLE_2"/>
    <property type="match status" value="1"/>
</dbReference>
<name>P3IP1_MOUSE</name>
<comment type="function">
    <text evidence="6">Negative regulator of hepatic phosphatidylinositol 3-kinase (PI3K) activity.</text>
</comment>
<comment type="subcellular location">
    <subcellularLocation>
        <location evidence="2">Cell membrane</location>
        <topology evidence="3">Single-pass type I membrane protein</topology>
    </subcellularLocation>
</comment>
<comment type="alternative products">
    <event type="alternative splicing"/>
    <isoform>
        <id>Q7TMJ8-1</id>
        <name>1</name>
        <name>HGFL(L)</name>
        <sequence type="displayed"/>
    </isoform>
    <isoform>
        <id>Q7TMJ8-2</id>
        <name>2</name>
        <name>HGFL(S)</name>
        <sequence type="described" ref="VSP_023641 VSP_023642"/>
    </isoform>
</comment>
<comment type="sequence caution" evidence="8">
    <conflict type="erroneous gene model prediction">
        <sequence resource="EMBL-CDS" id="CAI35211"/>
    </conflict>
</comment>
<comment type="sequence caution" evidence="8">
    <conflict type="erroneous gene model prediction">
        <sequence resource="EMBL-CDS" id="CAI35213"/>
    </conflict>
</comment>
<comment type="sequence caution" evidence="8">
    <conflict type="erroneous gene model prediction">
        <sequence resource="EMBL-CDS" id="CAI35214"/>
    </conflict>
</comment>
<reference key="1">
    <citation type="submission" date="2002-07" db="EMBL/GenBank/DDBJ databases">
        <authorList>
            <person name="Chiang H."/>
            <person name="Chang M."/>
        </authorList>
    </citation>
    <scope>NUCLEOTIDE SEQUENCE [MRNA] (ISOFORMS 1 AND 2)</scope>
    <source>
        <strain>BALB/cJ</strain>
    </source>
</reference>
<reference key="2">
    <citation type="submission" date="2004-01" db="EMBL/GenBank/DDBJ databases">
        <title>Calcineurin-NFAT signaling represses CRKD, an embryonic mammary marker secreted in breast cancer.</title>
        <authorList>
            <person name="Corbit K.C."/>
            <person name="Kuo A.C."/>
            <person name="Chen F."/>
            <person name="Crabtree G.R."/>
        </authorList>
    </citation>
    <scope>NUCLEOTIDE SEQUENCE [MRNA] (ISOFORM 1)</scope>
    <source>
        <strain>CD-1</strain>
    </source>
</reference>
<reference key="3">
    <citation type="journal article" date="2005" name="Science">
        <title>The transcriptional landscape of the mammalian genome.</title>
        <authorList>
            <person name="Carninci P."/>
            <person name="Kasukawa T."/>
            <person name="Katayama S."/>
            <person name="Gough J."/>
            <person name="Frith M.C."/>
            <person name="Maeda N."/>
            <person name="Oyama R."/>
            <person name="Ravasi T."/>
            <person name="Lenhard B."/>
            <person name="Wells C."/>
            <person name="Kodzius R."/>
            <person name="Shimokawa K."/>
            <person name="Bajic V.B."/>
            <person name="Brenner S.E."/>
            <person name="Batalov S."/>
            <person name="Forrest A.R."/>
            <person name="Zavolan M."/>
            <person name="Davis M.J."/>
            <person name="Wilming L.G."/>
            <person name="Aidinis V."/>
            <person name="Allen J.E."/>
            <person name="Ambesi-Impiombato A."/>
            <person name="Apweiler R."/>
            <person name="Aturaliya R.N."/>
            <person name="Bailey T.L."/>
            <person name="Bansal M."/>
            <person name="Baxter L."/>
            <person name="Beisel K.W."/>
            <person name="Bersano T."/>
            <person name="Bono H."/>
            <person name="Chalk A.M."/>
            <person name="Chiu K.P."/>
            <person name="Choudhary V."/>
            <person name="Christoffels A."/>
            <person name="Clutterbuck D.R."/>
            <person name="Crowe M.L."/>
            <person name="Dalla E."/>
            <person name="Dalrymple B.P."/>
            <person name="de Bono B."/>
            <person name="Della Gatta G."/>
            <person name="di Bernardo D."/>
            <person name="Down T."/>
            <person name="Engstrom P."/>
            <person name="Fagiolini M."/>
            <person name="Faulkner G."/>
            <person name="Fletcher C.F."/>
            <person name="Fukushima T."/>
            <person name="Furuno M."/>
            <person name="Futaki S."/>
            <person name="Gariboldi M."/>
            <person name="Georgii-Hemming P."/>
            <person name="Gingeras T.R."/>
            <person name="Gojobori T."/>
            <person name="Green R.E."/>
            <person name="Gustincich S."/>
            <person name="Harbers M."/>
            <person name="Hayashi Y."/>
            <person name="Hensch T.K."/>
            <person name="Hirokawa N."/>
            <person name="Hill D."/>
            <person name="Huminiecki L."/>
            <person name="Iacono M."/>
            <person name="Ikeo K."/>
            <person name="Iwama A."/>
            <person name="Ishikawa T."/>
            <person name="Jakt M."/>
            <person name="Kanapin A."/>
            <person name="Katoh M."/>
            <person name="Kawasawa Y."/>
            <person name="Kelso J."/>
            <person name="Kitamura H."/>
            <person name="Kitano H."/>
            <person name="Kollias G."/>
            <person name="Krishnan S.P."/>
            <person name="Kruger A."/>
            <person name="Kummerfeld S.K."/>
            <person name="Kurochkin I.V."/>
            <person name="Lareau L.F."/>
            <person name="Lazarevic D."/>
            <person name="Lipovich L."/>
            <person name="Liu J."/>
            <person name="Liuni S."/>
            <person name="McWilliam S."/>
            <person name="Madan Babu M."/>
            <person name="Madera M."/>
            <person name="Marchionni L."/>
            <person name="Matsuda H."/>
            <person name="Matsuzawa S."/>
            <person name="Miki H."/>
            <person name="Mignone F."/>
            <person name="Miyake S."/>
            <person name="Morris K."/>
            <person name="Mottagui-Tabar S."/>
            <person name="Mulder N."/>
            <person name="Nakano N."/>
            <person name="Nakauchi H."/>
            <person name="Ng P."/>
            <person name="Nilsson R."/>
            <person name="Nishiguchi S."/>
            <person name="Nishikawa S."/>
            <person name="Nori F."/>
            <person name="Ohara O."/>
            <person name="Okazaki Y."/>
            <person name="Orlando V."/>
            <person name="Pang K.C."/>
            <person name="Pavan W.J."/>
            <person name="Pavesi G."/>
            <person name="Pesole G."/>
            <person name="Petrovsky N."/>
            <person name="Piazza S."/>
            <person name="Reed J."/>
            <person name="Reid J.F."/>
            <person name="Ring B.Z."/>
            <person name="Ringwald M."/>
            <person name="Rost B."/>
            <person name="Ruan Y."/>
            <person name="Salzberg S.L."/>
            <person name="Sandelin A."/>
            <person name="Schneider C."/>
            <person name="Schoenbach C."/>
            <person name="Sekiguchi K."/>
            <person name="Semple C.A."/>
            <person name="Seno S."/>
            <person name="Sessa L."/>
            <person name="Sheng Y."/>
            <person name="Shibata Y."/>
            <person name="Shimada H."/>
            <person name="Shimada K."/>
            <person name="Silva D."/>
            <person name="Sinclair B."/>
            <person name="Sperling S."/>
            <person name="Stupka E."/>
            <person name="Sugiura K."/>
            <person name="Sultana R."/>
            <person name="Takenaka Y."/>
            <person name="Taki K."/>
            <person name="Tammoja K."/>
            <person name="Tan S.L."/>
            <person name="Tang S."/>
            <person name="Taylor M.S."/>
            <person name="Tegner J."/>
            <person name="Teichmann S.A."/>
            <person name="Ueda H.R."/>
            <person name="van Nimwegen E."/>
            <person name="Verardo R."/>
            <person name="Wei C.L."/>
            <person name="Yagi K."/>
            <person name="Yamanishi H."/>
            <person name="Zabarovsky E."/>
            <person name="Zhu S."/>
            <person name="Zimmer A."/>
            <person name="Hide W."/>
            <person name="Bult C."/>
            <person name="Grimmond S.M."/>
            <person name="Teasdale R.D."/>
            <person name="Liu E.T."/>
            <person name="Brusic V."/>
            <person name="Quackenbush J."/>
            <person name="Wahlestedt C."/>
            <person name="Mattick J.S."/>
            <person name="Hume D.A."/>
            <person name="Kai C."/>
            <person name="Sasaki D."/>
            <person name="Tomaru Y."/>
            <person name="Fukuda S."/>
            <person name="Kanamori-Katayama M."/>
            <person name="Suzuki M."/>
            <person name="Aoki J."/>
            <person name="Arakawa T."/>
            <person name="Iida J."/>
            <person name="Imamura K."/>
            <person name="Itoh M."/>
            <person name="Kato T."/>
            <person name="Kawaji H."/>
            <person name="Kawagashira N."/>
            <person name="Kawashima T."/>
            <person name="Kojima M."/>
            <person name="Kondo S."/>
            <person name="Konno H."/>
            <person name="Nakano K."/>
            <person name="Ninomiya N."/>
            <person name="Nishio T."/>
            <person name="Okada M."/>
            <person name="Plessy C."/>
            <person name="Shibata K."/>
            <person name="Shiraki T."/>
            <person name="Suzuki S."/>
            <person name="Tagami M."/>
            <person name="Waki K."/>
            <person name="Watahiki A."/>
            <person name="Okamura-Oho Y."/>
            <person name="Suzuki H."/>
            <person name="Kawai J."/>
            <person name="Hayashizaki Y."/>
        </authorList>
    </citation>
    <scope>NUCLEOTIDE SEQUENCE [LARGE SCALE MRNA] (ISOFORM 1)</scope>
    <source>
        <strain>C57BL/6J</strain>
        <strain>NOD</strain>
        <tissue>Testis</tissue>
    </source>
</reference>
<reference key="4">
    <citation type="journal article" date="2009" name="PLoS Biol.">
        <title>Lineage-specific biology revealed by a finished genome assembly of the mouse.</title>
        <authorList>
            <person name="Church D.M."/>
            <person name="Goodstadt L."/>
            <person name="Hillier L.W."/>
            <person name="Zody M.C."/>
            <person name="Goldstein S."/>
            <person name="She X."/>
            <person name="Bult C.J."/>
            <person name="Agarwala R."/>
            <person name="Cherry J.L."/>
            <person name="DiCuccio M."/>
            <person name="Hlavina W."/>
            <person name="Kapustin Y."/>
            <person name="Meric P."/>
            <person name="Maglott D."/>
            <person name="Birtle Z."/>
            <person name="Marques A.C."/>
            <person name="Graves T."/>
            <person name="Zhou S."/>
            <person name="Teague B."/>
            <person name="Potamousis K."/>
            <person name="Churas C."/>
            <person name="Place M."/>
            <person name="Herschleb J."/>
            <person name="Runnheim R."/>
            <person name="Forrest D."/>
            <person name="Amos-Landgraf J."/>
            <person name="Schwartz D.C."/>
            <person name="Cheng Z."/>
            <person name="Lindblad-Toh K."/>
            <person name="Eichler E.E."/>
            <person name="Ponting C.P."/>
        </authorList>
    </citation>
    <scope>NUCLEOTIDE SEQUENCE [LARGE SCALE GENOMIC DNA]</scope>
    <source>
        <strain>C57BL/6J</strain>
    </source>
</reference>
<reference key="5">
    <citation type="journal article" date="2004" name="Genome Res.">
        <title>The status, quality, and expansion of the NIH full-length cDNA project: the Mammalian Gene Collection (MGC).</title>
        <authorList>
            <consortium name="The MGC Project Team"/>
        </authorList>
    </citation>
    <scope>NUCLEOTIDE SEQUENCE [LARGE SCALE MRNA] (ISOFORM 1)</scope>
    <source>
        <strain>C57BL/6J</strain>
        <strain>FVB/N</strain>
        <tissue>Brain</tissue>
        <tissue>Mammary tumor</tissue>
    </source>
</reference>
<reference key="6">
    <citation type="journal article" date="2008" name="Cancer Res.">
        <title>PIK3IP1, a negative regulator of PI3K, suppresses the development of hepatocellular carcinoma.</title>
        <authorList>
            <person name="He X."/>
            <person name="Zhu Z."/>
            <person name="Johnson C."/>
            <person name="Stoops J."/>
            <person name="Eaker A.E."/>
            <person name="Bowen W."/>
            <person name="DeFrances M.C."/>
        </authorList>
    </citation>
    <scope>FUNCTION</scope>
</reference>
<gene>
    <name type="primary">Pik3ip1</name>
    <name type="synonym">Crkd</name>
    <name type="synonym">Hgfl</name>
</gene>
<organism>
    <name type="scientific">Mus musculus</name>
    <name type="common">Mouse</name>
    <dbReference type="NCBI Taxonomy" id="10090"/>
    <lineage>
        <taxon>Eukaryota</taxon>
        <taxon>Metazoa</taxon>
        <taxon>Chordata</taxon>
        <taxon>Craniata</taxon>
        <taxon>Vertebrata</taxon>
        <taxon>Euteleostomi</taxon>
        <taxon>Mammalia</taxon>
        <taxon>Eutheria</taxon>
        <taxon>Euarchontoglires</taxon>
        <taxon>Glires</taxon>
        <taxon>Rodentia</taxon>
        <taxon>Myomorpha</taxon>
        <taxon>Muroidea</taxon>
        <taxon>Muridae</taxon>
        <taxon>Murinae</taxon>
        <taxon>Mus</taxon>
        <taxon>Mus</taxon>
    </lineage>
</organism>
<keyword id="KW-0025">Alternative splicing</keyword>
<keyword id="KW-1003">Cell membrane</keyword>
<keyword id="KW-1015">Disulfide bond</keyword>
<keyword id="KW-0420">Kringle</keyword>
<keyword id="KW-0472">Membrane</keyword>
<keyword id="KW-1185">Reference proteome</keyword>
<keyword id="KW-0732">Signal</keyword>
<keyword id="KW-0812">Transmembrane</keyword>
<keyword id="KW-1133">Transmembrane helix</keyword>
<protein>
    <recommendedName>
        <fullName>Phosphoinositide-3-kinase-interacting protein 1</fullName>
    </recommendedName>
    <alternativeName>
        <fullName>Calcineurin-regulated kringle domain-containing protein</fullName>
    </alternativeName>
    <alternativeName>
        <fullName>Kringle domain-containing protein HGFL</fullName>
    </alternativeName>
</protein>
<accession>Q7TMJ8</accession>
<accession>Q3TTD5</accession>
<accession>Q5NBY3</accession>
<accession>Q5NBY4</accession>
<accession>Q5NBY6</accession>
<accession>Q811Z2</accession>
<accession>Q811Z3</accession>
<sequence length="264" mass="28567">MLLAWVHTFLLSNMLLAEAYGSGGCFWDNGHLYREDQPSPAPGLRCLNWLAAQGSRESLTEPSPGNHNYCRNPDQDPRGPWCYISSETGVPEKRPCEDVSCPETTSQAPPPSSAMELEEKSGAPGDKEAQVFPPANALPARSEAAEVQPVIGISQLVRMNSKEKKDLGTLGYVLGITMMVIILAIGAGIIVGYTYKRGKDLKEQHEKKACEREMQRITLPLSAFTNPTCETVDENTIIVHSNQTPADVQEGSTLLTGQAGTPGA</sequence>
<feature type="signal peptide" evidence="1">
    <location>
        <begin position="1"/>
        <end position="21"/>
    </location>
</feature>
<feature type="chain" id="PRO_0000280348" description="Phosphoinositide-3-kinase-interacting protein 1">
    <location>
        <begin position="22"/>
        <end position="264"/>
    </location>
</feature>
<feature type="topological domain" description="Extracellular" evidence="3">
    <location>
        <begin position="22"/>
        <end position="170"/>
    </location>
</feature>
<feature type="transmembrane region" description="Helical" evidence="3">
    <location>
        <begin position="171"/>
        <end position="191"/>
    </location>
</feature>
<feature type="topological domain" description="Cytoplasmic" evidence="3">
    <location>
        <begin position="192"/>
        <end position="264"/>
    </location>
</feature>
<feature type="domain" description="Kringle" evidence="4">
    <location>
        <begin position="24"/>
        <end position="101"/>
    </location>
</feature>
<feature type="region of interest" description="Disordered" evidence="5">
    <location>
        <begin position="94"/>
        <end position="129"/>
    </location>
</feature>
<feature type="compositionally biased region" description="Basic and acidic residues" evidence="5">
    <location>
        <begin position="117"/>
        <end position="129"/>
    </location>
</feature>
<feature type="disulfide bond" evidence="4">
    <location>
        <begin position="25"/>
        <end position="101"/>
    </location>
</feature>
<feature type="disulfide bond" evidence="4">
    <location>
        <begin position="46"/>
        <end position="82"/>
    </location>
</feature>
<feature type="disulfide bond" evidence="4">
    <location>
        <begin position="70"/>
        <end position="96"/>
    </location>
</feature>
<feature type="splice variant" id="VSP_023641" description="In isoform 2." evidence="7">
    <original>GKDLKEQHEKKACERE</original>
    <variation>WVLSPPGSLGIGLRKT</variation>
    <location>
        <begin position="198"/>
        <end position="213"/>
    </location>
</feature>
<feature type="splice variant" id="VSP_023642" description="In isoform 2." evidence="7">
    <location>
        <begin position="214"/>
        <end position="264"/>
    </location>
</feature>
<feature type="sequence conflict" description="In Ref. 1; AAO33764." evidence="8" ref="1">
    <original>Q</original>
    <variation>R</variation>
    <location>
        <position position="243"/>
    </location>
</feature>
<evidence type="ECO:0000250" key="1"/>
<evidence type="ECO:0000250" key="2">
    <source>
        <dbReference type="UniProtKB" id="Q96FE7"/>
    </source>
</evidence>
<evidence type="ECO:0000255" key="3"/>
<evidence type="ECO:0000255" key="4">
    <source>
        <dbReference type="PROSITE-ProRule" id="PRU00121"/>
    </source>
</evidence>
<evidence type="ECO:0000256" key="5">
    <source>
        <dbReference type="SAM" id="MobiDB-lite"/>
    </source>
</evidence>
<evidence type="ECO:0000269" key="6">
    <source>
    </source>
</evidence>
<evidence type="ECO:0000303" key="7">
    <source ref="1"/>
</evidence>
<evidence type="ECO:0000305" key="8"/>
<proteinExistence type="evidence at transcript level"/>